<feature type="chain" id="PRO_1000073411" description="Large ribosomal subunit protein uL13">
    <location>
        <begin position="1"/>
        <end position="153"/>
    </location>
</feature>
<organism>
    <name type="scientific">Azorhizobium caulinodans (strain ATCC 43989 / DSM 5975 / JCM 20966 / LMG 6465 / NBRC 14845 / NCIMB 13405 / ORS 571)</name>
    <dbReference type="NCBI Taxonomy" id="438753"/>
    <lineage>
        <taxon>Bacteria</taxon>
        <taxon>Pseudomonadati</taxon>
        <taxon>Pseudomonadota</taxon>
        <taxon>Alphaproteobacteria</taxon>
        <taxon>Hyphomicrobiales</taxon>
        <taxon>Xanthobacteraceae</taxon>
        <taxon>Azorhizobium</taxon>
    </lineage>
</organism>
<evidence type="ECO:0000255" key="1">
    <source>
        <dbReference type="HAMAP-Rule" id="MF_01366"/>
    </source>
</evidence>
<evidence type="ECO:0000305" key="2"/>
<comment type="function">
    <text evidence="1">This protein is one of the early assembly proteins of the 50S ribosomal subunit, although it is not seen to bind rRNA by itself. It is important during the early stages of 50S assembly.</text>
</comment>
<comment type="subunit">
    <text evidence="1">Part of the 50S ribosomal subunit.</text>
</comment>
<comment type="similarity">
    <text evidence="1">Belongs to the universal ribosomal protein uL13 family.</text>
</comment>
<protein>
    <recommendedName>
        <fullName evidence="1">Large ribosomal subunit protein uL13</fullName>
    </recommendedName>
    <alternativeName>
        <fullName evidence="2">50S ribosomal protein L13</fullName>
    </alternativeName>
</protein>
<name>RL13_AZOC5</name>
<accession>A8I7Z7</accession>
<reference key="1">
    <citation type="submission" date="2007-04" db="EMBL/GenBank/DDBJ databases">
        <title>Complete genome sequence of the nitrogen-fixing bacterium Azorhizobium caulinodans ORS571.</title>
        <authorList>
            <person name="Lee K.B."/>
            <person name="Backer P.D."/>
            <person name="Aono T."/>
            <person name="Liu C.T."/>
            <person name="Suzuki S."/>
            <person name="Suzuki T."/>
            <person name="Kaneko T."/>
            <person name="Yamada M."/>
            <person name="Tabata S."/>
            <person name="Kupfer D.M."/>
            <person name="Najar F.Z."/>
            <person name="Wiley G.B."/>
            <person name="Roe B."/>
            <person name="Binnewies T."/>
            <person name="Ussery D."/>
            <person name="Vereecke D."/>
            <person name="Gevers D."/>
            <person name="Holsters M."/>
            <person name="Oyaizu H."/>
        </authorList>
    </citation>
    <scope>NUCLEOTIDE SEQUENCE [LARGE SCALE GENOMIC DNA]</scope>
    <source>
        <strain>ATCC 43989 / DSM 5975 / JCM 20966 / LMG 6465 / NBRC 14845 / NCIMB 13405 / ORS 571</strain>
    </source>
</reference>
<sequence>MKTYSAKPADIEKKWVVIDATGLVVGRLATVIAMRLRGKHRATFTPHVDTGDNVVVINAEKVVLTGRKRDQKVYYHHTGFPGGIKERTAKFILDGRFPERVIEKAVERMLARGPLGRKVLGNLRVYKGPTHPHEAQQPTVLDVAALNSKNVRI</sequence>
<gene>
    <name evidence="1" type="primary">rplM</name>
    <name type="ordered locus">AZC_2190</name>
</gene>
<keyword id="KW-1185">Reference proteome</keyword>
<keyword id="KW-0687">Ribonucleoprotein</keyword>
<keyword id="KW-0689">Ribosomal protein</keyword>
<proteinExistence type="inferred from homology"/>
<dbReference type="EMBL" id="AP009384">
    <property type="protein sequence ID" value="BAF88188.1"/>
    <property type="molecule type" value="Genomic_DNA"/>
</dbReference>
<dbReference type="RefSeq" id="WP_012170717.1">
    <property type="nucleotide sequence ID" value="NC_009937.1"/>
</dbReference>
<dbReference type="SMR" id="A8I7Z7"/>
<dbReference type="STRING" id="438753.AZC_2190"/>
<dbReference type="KEGG" id="azc:AZC_2190"/>
<dbReference type="eggNOG" id="COG0102">
    <property type="taxonomic scope" value="Bacteria"/>
</dbReference>
<dbReference type="HOGENOM" id="CLU_082184_2_0_5"/>
<dbReference type="Proteomes" id="UP000000270">
    <property type="component" value="Chromosome"/>
</dbReference>
<dbReference type="GO" id="GO:0022625">
    <property type="term" value="C:cytosolic large ribosomal subunit"/>
    <property type="evidence" value="ECO:0007669"/>
    <property type="project" value="TreeGrafter"/>
</dbReference>
<dbReference type="GO" id="GO:0003729">
    <property type="term" value="F:mRNA binding"/>
    <property type="evidence" value="ECO:0007669"/>
    <property type="project" value="TreeGrafter"/>
</dbReference>
<dbReference type="GO" id="GO:0003735">
    <property type="term" value="F:structural constituent of ribosome"/>
    <property type="evidence" value="ECO:0007669"/>
    <property type="project" value="InterPro"/>
</dbReference>
<dbReference type="GO" id="GO:0017148">
    <property type="term" value="P:negative regulation of translation"/>
    <property type="evidence" value="ECO:0007669"/>
    <property type="project" value="TreeGrafter"/>
</dbReference>
<dbReference type="GO" id="GO:0006412">
    <property type="term" value="P:translation"/>
    <property type="evidence" value="ECO:0007669"/>
    <property type="project" value="UniProtKB-UniRule"/>
</dbReference>
<dbReference type="CDD" id="cd00392">
    <property type="entry name" value="Ribosomal_L13"/>
    <property type="match status" value="1"/>
</dbReference>
<dbReference type="FunFam" id="3.90.1180.10:FF:000001">
    <property type="entry name" value="50S ribosomal protein L13"/>
    <property type="match status" value="1"/>
</dbReference>
<dbReference type="Gene3D" id="3.90.1180.10">
    <property type="entry name" value="Ribosomal protein L13"/>
    <property type="match status" value="1"/>
</dbReference>
<dbReference type="HAMAP" id="MF_01366">
    <property type="entry name" value="Ribosomal_uL13"/>
    <property type="match status" value="1"/>
</dbReference>
<dbReference type="InterPro" id="IPR005822">
    <property type="entry name" value="Ribosomal_uL13"/>
</dbReference>
<dbReference type="InterPro" id="IPR005823">
    <property type="entry name" value="Ribosomal_uL13_bac-type"/>
</dbReference>
<dbReference type="InterPro" id="IPR036899">
    <property type="entry name" value="Ribosomal_uL13_sf"/>
</dbReference>
<dbReference type="NCBIfam" id="TIGR01066">
    <property type="entry name" value="rplM_bact"/>
    <property type="match status" value="1"/>
</dbReference>
<dbReference type="PANTHER" id="PTHR11545:SF2">
    <property type="entry name" value="LARGE RIBOSOMAL SUBUNIT PROTEIN UL13M"/>
    <property type="match status" value="1"/>
</dbReference>
<dbReference type="PANTHER" id="PTHR11545">
    <property type="entry name" value="RIBOSOMAL PROTEIN L13"/>
    <property type="match status" value="1"/>
</dbReference>
<dbReference type="Pfam" id="PF00572">
    <property type="entry name" value="Ribosomal_L13"/>
    <property type="match status" value="1"/>
</dbReference>
<dbReference type="PIRSF" id="PIRSF002181">
    <property type="entry name" value="Ribosomal_L13"/>
    <property type="match status" value="1"/>
</dbReference>
<dbReference type="SUPFAM" id="SSF52161">
    <property type="entry name" value="Ribosomal protein L13"/>
    <property type="match status" value="1"/>
</dbReference>